<comment type="function">
    <text evidence="2 5 6 10 12">Catalytic subunit of the V1 complex of vacuolar(H+)-ATPase (V-ATPase), a multisubunit enzyme composed of a peripheral complex (V1) that hydrolyzes ATP and a membrane integral complex (V0) that translocates protons (PubMed:8463241). V-ATPase is responsible for acidifying and maintaining the pH of intracellular compartments and in some cell types, is targeted to the plasma membrane, where it is responsible for acidifying the extracellular environment (PubMed:32001091). In aerobic conditions, involved in intracellular iron homeostasis, thus triggering the activity of Fe(2+) prolyl hydroxylase (PHD) enzymes, and leading to HIF1A hydroxylation and subsequent proteasomal degradation (PubMed:28296633). May play a role in neurite development and synaptic connectivity (PubMed:29668857).</text>
</comment>
<comment type="function">
    <text evidence="9">(Microbial infection) Plays an important role in virion uncoating during Rabies virus replication after membrane fusion. Specifically, participates in the dissociation of incoming viral matrix M proteins uncoating through direct interaction.</text>
</comment>
<comment type="catalytic activity">
    <reaction evidence="2">
        <text>ATP + H2O + 4 H(+)(in) = ADP + phosphate + 5 H(+)(out)</text>
        <dbReference type="Rhea" id="RHEA:57720"/>
        <dbReference type="ChEBI" id="CHEBI:15377"/>
        <dbReference type="ChEBI" id="CHEBI:15378"/>
        <dbReference type="ChEBI" id="CHEBI:30616"/>
        <dbReference type="ChEBI" id="CHEBI:43474"/>
        <dbReference type="ChEBI" id="CHEBI:456216"/>
        <dbReference type="EC" id="7.1.2.2"/>
    </reaction>
</comment>
<comment type="activity regulation">
    <text evidence="1">ATP hydrolysis occurs at the interface between the nucleotide-binding domains of subunits A and B (By similarity). ATP hydrolysis triggers a conformational change in the subunits D and F, which induces a shift of subunit d (By similarity). The c-ring is subsequently rotated and results in a continuous proton translocation across the membrane (By similarity).</text>
</comment>
<comment type="subunit">
    <text evidence="2 3 7 8">V-ATPase is a heteromultimeric enzyme made up of two complexes: the ATP-hydrolytic V1 complex and the proton translocation V0 complex (PubMed:33065002). The V1 complex consists of three catalytic AB heterodimers that form a heterohexamer, three peripheral stalks each consisting of EG heterodimers, one central rotor including subunits D and F, and the regulatory subunits C and H (PubMed:33065002). The proton translocation complex V0 consists of the proton transport subunit a, a ring of proteolipid subunits c9c'', rotary subunit d, subunits e and f, and the accessory subunits ATP6AP1/Ac45 and ATP6AP2/PRR (PubMed:33065002). Interacts with the V0 complex V-ATPase subunit a4 ATP6V0A4 (By similarity). Interacts with WFS1 (PubMed:23035048). Interacts with alpha-crystallin B chain/CRYAB and with MTOR, forming a ternary complex (PubMed:31786107).</text>
</comment>
<comment type="subunit">
    <text evidence="9">(Microbial infection) Interacts with Rabies virus protein M; this interaction promotes virion uncoating.</text>
</comment>
<comment type="interaction">
    <interactant intactId="EBI-1054757">
        <id>P38606</id>
    </interactant>
    <interactant intactId="EBI-25567776">
        <id>P0DOF2</id>
        <label>M</label>
    </interactant>
    <organismsDiffer>true</organismsDiffer>
    <experiments>10</experiments>
</comment>
<comment type="subcellular location">
    <subcellularLocation>
        <location evidence="6 9">Cytoplasm</location>
    </subcellularLocation>
    <subcellularLocation>
        <location evidence="2">Cytoplasm</location>
        <location evidence="2">Cytosol</location>
    </subcellularLocation>
    <subcellularLocation>
        <location evidence="3">Cytoplasmic vesicle</location>
        <location evidence="3">Secretory vesicle</location>
    </subcellularLocation>
    <subcellularLocation>
        <location evidence="1">Cytoplasmic vesicle</location>
        <location evidence="1">Clathrin-coated vesicle membrane</location>
        <topology evidence="13">Peripheral membrane protein</topology>
    </subcellularLocation>
    <subcellularLocation>
        <location evidence="2">Lysosome</location>
    </subcellularLocation>
    <text evidence="3">Co-localizes with WFS1 in the secretory granules in neuroblastoma cell lines.</text>
</comment>
<comment type="alternative products">
    <event type="alternative splicing"/>
    <isoform>
        <id>P38606-1</id>
        <name>1</name>
        <sequence type="displayed"/>
    </isoform>
    <isoform>
        <id>P38606-2</id>
        <name>2</name>
        <sequence type="described" ref="VSP_056408"/>
    </isoform>
</comment>
<comment type="tissue specificity">
    <text evidence="4">High expression in the skin.</text>
</comment>
<comment type="PTM">
    <text evidence="2">Phosphorylation at Ser-384 by AMPK down-regulates its enzyme activity.</text>
</comment>
<comment type="disease" evidence="4">
    <disease id="DI-04975">
        <name>Cutis laxa, autosomal recessive, 2D</name>
        <acronym>ARCL2D</acronym>
        <description>A form of cutis laxa, a disorder characterized by an excessive congenital skin wrinkling, a large fontanelle with delayed closure, a typical facial appearance with downslanting palpebral fissures, and a general connective tissue weakness. Most ARCL2D patients exhibit severe hypotonia as well as cardiovascular and neurologic involvement.</description>
        <dbReference type="MIM" id="617403"/>
    </disease>
    <text>The disease is caused by variants affecting the gene represented in this entry.</text>
</comment>
<comment type="disease" evidence="6">
    <disease id="DI-05273">
        <name>Epileptic encephalopathy, infantile or early childhood, 3</name>
        <acronym>IECEE3</acronym>
        <description>A form of epileptic encephalopathy, a heterogeneous group of severe childhood onset epilepsies characterized by refractory seizures, neurodevelopmental impairment, and poor prognosis. Development is normal prior to seizure onset, after which cognitive and motor delays become apparent. IECEE3 is an autosomal dominant form characterized by onset of seizures in the first years of life. The severity of the phenotype is highly variable: some patients may be non-verbal and non-ambulatory with spastic quadriparesis and poor eye contact, whereas others have moderate intellectual disability.</description>
        <dbReference type="MIM" id="618012"/>
    </disease>
    <text>The disease is caused by variants affecting the gene represented in this entry.</text>
</comment>
<comment type="similarity">
    <text evidence="13">Belongs to the ATPase alpha/beta chains family.</text>
</comment>
<keyword id="KW-0002">3D-structure</keyword>
<keyword id="KW-0007">Acetylation</keyword>
<keyword id="KW-0025">Alternative splicing</keyword>
<keyword id="KW-0067">ATP-binding</keyword>
<keyword id="KW-0963">Cytoplasm</keyword>
<keyword id="KW-0968">Cytoplasmic vesicle</keyword>
<keyword id="KW-0225">Disease variant</keyword>
<keyword id="KW-0887">Epilepsy</keyword>
<keyword id="KW-0375">Hydrogen ion transport</keyword>
<keyword id="KW-0406">Ion transport</keyword>
<keyword id="KW-0458">Lysosome</keyword>
<keyword id="KW-0472">Membrane</keyword>
<keyword id="KW-0547">Nucleotide-binding</keyword>
<keyword id="KW-0597">Phosphoprotein</keyword>
<keyword id="KW-1267">Proteomics identification</keyword>
<keyword id="KW-1185">Reference proteome</keyword>
<keyword id="KW-1278">Translocase</keyword>
<keyword id="KW-0813">Transport</keyword>
<feature type="chain" id="PRO_0000144560" description="V-type proton ATPase catalytic subunit A">
    <location>
        <begin position="1"/>
        <end position="617"/>
    </location>
</feature>
<feature type="binding site" evidence="14 15 17 18 19">
    <location>
        <begin position="250"/>
        <end position="257"/>
    </location>
    <ligand>
        <name>ATP</name>
        <dbReference type="ChEBI" id="CHEBI:30616"/>
    </ligand>
</feature>
<feature type="modified residue" description="Phosphothreonine" evidence="21">
    <location>
        <position position="136"/>
    </location>
</feature>
<feature type="modified residue" description="Phosphoserine; by AMPK" evidence="21">
    <location>
        <position position="384"/>
    </location>
</feature>
<feature type="splice variant" id="VSP_056408" description="In isoform 2." evidence="11">
    <location>
        <begin position="1"/>
        <end position="33"/>
    </location>
</feature>
<feature type="sequence variant" id="VAR_080994" description="Found in a patient with autism spectrum disorder; uncertain significance; dbSNP:rs746407800." evidence="6">
    <original>D</original>
    <variation>N</variation>
    <location>
        <position position="11"/>
    </location>
</feature>
<feature type="sequence variant" id="VAR_080995" description="In IECEE3; uncertain significance; dbSNP:rs1553709380." evidence="6">
    <original>P</original>
    <variation>R</variation>
    <location>
        <position position="27"/>
    </location>
</feature>
<feature type="sequence variant" id="VAR_078606" description="In ARCL2D; dbSNP:rs1060505037." evidence="4">
    <original>G</original>
    <variation>D</variation>
    <location>
        <position position="72"/>
    </location>
</feature>
<feature type="sequence variant" id="VAR_080996" description="In IECEE3; loss-of-function variant leading to increased pH in intracellular organelles; affects neurite arborization and impairs the formation and maintenance of excitatory synapses, when tested in a heterologous system; not effect on subcellular location; dbSNP:rs1553709855." evidence="6">
    <original>D</original>
    <variation>Y</variation>
    <location>
        <position position="100"/>
    </location>
</feature>
<feature type="sequence variant" id="VAR_080997" description="Found in a patient with severe developmental disorder; uncertain significance." evidence="6">
    <original>P</original>
    <variation>R</variation>
    <location>
        <position position="249"/>
    </location>
</feature>
<feature type="sequence variant" id="VAR_078607" description="In ARCL2D; dbSNP:rs1060505036." evidence="4">
    <original>R</original>
    <variation>C</variation>
    <location>
        <position position="338"/>
    </location>
</feature>
<feature type="sequence variant" id="VAR_080998" description="In IECEE3; gain-of-function variant leading to decreased pH in intracellular organelles; affects neurite arborization and impairs the formation and maintenance of excitatory synapses, when tested in a heterologous system; not effect on subcellular location; dbSNP:rs1553710664." evidence="6">
    <original>D</original>
    <variation>N</variation>
    <location>
        <position position="349"/>
    </location>
</feature>
<feature type="sequence variant" id="VAR_080999" description="In IECEE3; uncertain significance." evidence="6">
    <original>D</original>
    <variation>G</variation>
    <location>
        <position position="371"/>
    </location>
</feature>
<feature type="mutagenesis site" description="Complete loss of interaction with Rabies virus protein M; when associated with Q-279." evidence="9">
    <original>K</original>
    <variation>Q</variation>
    <location>
        <position position="256"/>
    </location>
</feature>
<feature type="mutagenesis site" description="Complete loss of interaction with Rabies virus protein M; when associated with Q-256." evidence="9">
    <original>E</original>
    <variation>Q</variation>
    <location>
        <position position="279"/>
    </location>
</feature>
<feature type="sequence conflict" description="In Ref. 1; AAA83249." evidence="13" ref="1">
    <original>S</original>
    <variation>C</variation>
    <location>
        <position position="71"/>
    </location>
</feature>
<feature type="sequence conflict" description="In Ref. 1; AAA83249." evidence="13" ref="1">
    <original>EL</original>
    <variation>DV</variation>
    <location>
        <begin position="89"/>
        <end position="90"/>
    </location>
</feature>
<feature type="sequence conflict" description="In Ref. 1; AAA83249 and 2; AAF14870." evidence="13" ref="1 2">
    <original>V</original>
    <variation>A</variation>
    <location>
        <position position="211"/>
    </location>
</feature>
<feature type="strand" evidence="22">
    <location>
        <begin position="18"/>
        <end position="25"/>
    </location>
</feature>
<feature type="strand" evidence="22">
    <location>
        <begin position="28"/>
        <end position="32"/>
    </location>
</feature>
<feature type="strand" evidence="22">
    <location>
        <begin position="42"/>
        <end position="45"/>
    </location>
</feature>
<feature type="turn" evidence="22">
    <location>
        <begin position="46"/>
        <end position="49"/>
    </location>
</feature>
<feature type="strand" evidence="22">
    <location>
        <begin position="50"/>
        <end position="58"/>
    </location>
</feature>
<feature type="strand" evidence="22">
    <location>
        <begin position="61"/>
        <end position="68"/>
    </location>
</feature>
<feature type="strand" evidence="22">
    <location>
        <begin position="78"/>
        <end position="81"/>
    </location>
</feature>
<feature type="strand" evidence="22">
    <location>
        <begin position="86"/>
        <end position="93"/>
    </location>
</feature>
<feature type="helix" evidence="22">
    <location>
        <begin position="106"/>
        <end position="113"/>
    </location>
</feature>
<feature type="strand" evidence="22">
    <location>
        <begin position="115"/>
        <end position="117"/>
    </location>
</feature>
<feature type="strand" evidence="23">
    <location>
        <begin position="129"/>
        <end position="131"/>
    </location>
</feature>
<feature type="strand" evidence="22">
    <location>
        <begin position="133"/>
        <end position="137"/>
    </location>
</feature>
<feature type="strand" evidence="22">
    <location>
        <begin position="146"/>
        <end position="148"/>
    </location>
</feature>
<feature type="strand" evidence="22">
    <location>
        <begin position="152"/>
        <end position="157"/>
    </location>
</feature>
<feature type="strand" evidence="22">
    <location>
        <begin position="159"/>
        <end position="161"/>
    </location>
</feature>
<feature type="strand" evidence="22">
    <location>
        <begin position="163"/>
        <end position="167"/>
    </location>
</feature>
<feature type="strand" evidence="22">
    <location>
        <begin position="173"/>
        <end position="179"/>
    </location>
</feature>
<feature type="strand" evidence="22">
    <location>
        <begin position="182"/>
        <end position="185"/>
    </location>
</feature>
<feature type="strand" evidence="22">
    <location>
        <begin position="192"/>
        <end position="198"/>
    </location>
</feature>
<feature type="strand" evidence="22">
    <location>
        <begin position="200"/>
        <end position="203"/>
    </location>
</feature>
<feature type="strand" evidence="22">
    <location>
        <begin position="207"/>
        <end position="210"/>
    </location>
</feature>
<feature type="strand" evidence="22">
    <location>
        <begin position="218"/>
        <end position="221"/>
    </location>
</feature>
<feature type="helix" evidence="22">
    <location>
        <begin position="232"/>
        <end position="236"/>
    </location>
</feature>
<feature type="strand" evidence="22">
    <location>
        <begin position="245"/>
        <end position="248"/>
    </location>
</feature>
<feature type="turn" evidence="22">
    <location>
        <begin position="252"/>
        <end position="255"/>
    </location>
</feature>
<feature type="helix" evidence="22">
    <location>
        <begin position="256"/>
        <end position="265"/>
    </location>
</feature>
<feature type="strand" evidence="22">
    <location>
        <begin position="266"/>
        <end position="268"/>
    </location>
</feature>
<feature type="strand" evidence="22">
    <location>
        <begin position="270"/>
        <end position="279"/>
    </location>
</feature>
<feature type="helix" evidence="22">
    <location>
        <begin position="281"/>
        <end position="290"/>
    </location>
</feature>
<feature type="turn" evidence="23">
    <location>
        <begin position="291"/>
        <end position="293"/>
    </location>
</feature>
<feature type="strand" evidence="22">
    <location>
        <begin position="295"/>
        <end position="298"/>
    </location>
</feature>
<feature type="strand" evidence="22">
    <location>
        <begin position="301"/>
        <end position="304"/>
    </location>
</feature>
<feature type="helix" evidence="22">
    <location>
        <begin position="305"/>
        <end position="307"/>
    </location>
</feature>
<feature type="strand" evidence="22">
    <location>
        <begin position="308"/>
        <end position="312"/>
    </location>
</feature>
<feature type="helix" evidence="22">
    <location>
        <begin position="320"/>
        <end position="323"/>
    </location>
</feature>
<feature type="helix" evidence="22">
    <location>
        <begin position="326"/>
        <end position="338"/>
    </location>
</feature>
<feature type="turn" evidence="22">
    <location>
        <begin position="339"/>
        <end position="341"/>
    </location>
</feature>
<feature type="strand" evidence="22">
    <location>
        <begin position="343"/>
        <end position="349"/>
    </location>
</feature>
<feature type="helix" evidence="22">
    <location>
        <begin position="352"/>
        <end position="364"/>
    </location>
</feature>
<feature type="strand" evidence="23">
    <location>
        <begin position="369"/>
        <end position="371"/>
    </location>
</feature>
<feature type="helix" evidence="22">
    <location>
        <begin position="378"/>
        <end position="386"/>
    </location>
</feature>
<feature type="strand" evidence="22">
    <location>
        <begin position="390"/>
        <end position="393"/>
    </location>
</feature>
<feature type="strand" evidence="22">
    <location>
        <begin position="395"/>
        <end position="398"/>
    </location>
</feature>
<feature type="strand" evidence="22">
    <location>
        <begin position="402"/>
        <end position="409"/>
    </location>
</feature>
<feature type="strand" evidence="22">
    <location>
        <begin position="413"/>
        <end position="415"/>
    </location>
</feature>
<feature type="helix" evidence="22">
    <location>
        <begin position="420"/>
        <end position="425"/>
    </location>
</feature>
<feature type="turn" evidence="22">
    <location>
        <begin position="426"/>
        <end position="428"/>
    </location>
</feature>
<feature type="strand" evidence="22">
    <location>
        <begin position="430"/>
        <end position="432"/>
    </location>
</feature>
<feature type="helix" evidence="22">
    <location>
        <begin position="437"/>
        <end position="441"/>
    </location>
</feature>
<feature type="strand" evidence="22">
    <location>
        <begin position="450"/>
        <end position="452"/>
    </location>
</feature>
<feature type="strand" evidence="22">
    <location>
        <begin position="454"/>
        <end position="456"/>
    </location>
</feature>
<feature type="turn" evidence="22">
    <location>
        <begin position="458"/>
        <end position="461"/>
    </location>
</feature>
<feature type="helix" evidence="22">
    <location>
        <begin position="462"/>
        <end position="468"/>
    </location>
</feature>
<feature type="helix" evidence="22">
    <location>
        <begin position="472"/>
        <end position="493"/>
    </location>
</feature>
<feature type="turn" evidence="22">
    <location>
        <begin position="494"/>
        <end position="496"/>
    </location>
</feature>
<feature type="strand" evidence="22">
    <location>
        <begin position="498"/>
        <end position="500"/>
    </location>
</feature>
<feature type="helix" evidence="22">
    <location>
        <begin position="503"/>
        <end position="518"/>
    </location>
</feature>
<feature type="strand" evidence="22">
    <location>
        <begin position="526"/>
        <end position="531"/>
    </location>
</feature>
<feature type="helix" evidence="22">
    <location>
        <begin position="534"/>
        <end position="557"/>
    </location>
</feature>
<feature type="strand" evidence="22">
    <location>
        <begin position="559"/>
        <end position="563"/>
    </location>
</feature>
<feature type="helix" evidence="22">
    <location>
        <begin position="568"/>
        <end position="571"/>
    </location>
</feature>
<feature type="strand" evidence="22">
    <location>
        <begin position="574"/>
        <end position="576"/>
    </location>
</feature>
<feature type="helix" evidence="22">
    <location>
        <begin position="577"/>
        <end position="580"/>
    </location>
</feature>
<feature type="helix" evidence="22">
    <location>
        <begin position="584"/>
        <end position="586"/>
    </location>
</feature>
<feature type="turn" evidence="22">
    <location>
        <begin position="589"/>
        <end position="591"/>
    </location>
</feature>
<feature type="helix" evidence="22">
    <location>
        <begin position="594"/>
        <end position="615"/>
    </location>
</feature>
<feature type="initiator methionine" description="Removed" evidence="20">
    <location sequence="P38606-2">
        <position position="1"/>
    </location>
</feature>
<feature type="modified residue" description="N-acetylalanine" evidence="20">
    <location sequence="P38606-2">
        <position position="2"/>
    </location>
</feature>
<organism>
    <name type="scientific">Homo sapiens</name>
    <name type="common">Human</name>
    <dbReference type="NCBI Taxonomy" id="9606"/>
    <lineage>
        <taxon>Eukaryota</taxon>
        <taxon>Metazoa</taxon>
        <taxon>Chordata</taxon>
        <taxon>Craniata</taxon>
        <taxon>Vertebrata</taxon>
        <taxon>Euteleostomi</taxon>
        <taxon>Mammalia</taxon>
        <taxon>Eutheria</taxon>
        <taxon>Euarchontoglires</taxon>
        <taxon>Primates</taxon>
        <taxon>Haplorrhini</taxon>
        <taxon>Catarrhini</taxon>
        <taxon>Hominidae</taxon>
        <taxon>Homo</taxon>
    </lineage>
</organism>
<reference key="1">
    <citation type="journal article" date="1993" name="J. Biol. Chem.">
        <title>Identification of two subunit A isoforms of the vacuolar H(+)-ATPase in human osteoclastoma.</title>
        <authorList>
            <person name="van Hille B."/>
            <person name="Richener H."/>
            <person name="Evans D.B."/>
            <person name="Green J.R."/>
            <person name="Bilbe G."/>
        </authorList>
    </citation>
    <scope>NUCLEOTIDE SEQUENCE [MRNA] (ISOFORM 1)</scope>
    <source>
        <tissue>Fetal adrenal gland</tissue>
        <tissue>Leukocyte</tissue>
    </source>
</reference>
<reference key="2">
    <citation type="journal article" date="2000" name="Proc. Natl. Acad. Sci. U.S.A.">
        <title>Gene expression profiling in the human hypothalamus-pituitary-adrenal axis and full-length cDNA cloning.</title>
        <authorList>
            <person name="Hu R.-M."/>
            <person name="Han Z.-G."/>
            <person name="Song H.-D."/>
            <person name="Peng Y.-D."/>
            <person name="Huang Q.-H."/>
            <person name="Ren S.-X."/>
            <person name="Gu Y.-J."/>
            <person name="Huang C.-H."/>
            <person name="Li Y.-B."/>
            <person name="Jiang C.-L."/>
            <person name="Fu G."/>
            <person name="Zhang Q.-H."/>
            <person name="Gu B.-W."/>
            <person name="Dai M."/>
            <person name="Mao Y.-F."/>
            <person name="Gao G.-F."/>
            <person name="Rong R."/>
            <person name="Ye M."/>
            <person name="Zhou J."/>
            <person name="Xu S.-H."/>
            <person name="Gu J."/>
            <person name="Shi J.-X."/>
            <person name="Jin W.-R."/>
            <person name="Zhang C.-K."/>
            <person name="Wu T.-M."/>
            <person name="Huang G.-Y."/>
            <person name="Chen Z."/>
            <person name="Chen M.-D."/>
            <person name="Chen J.-L."/>
        </authorList>
    </citation>
    <scope>NUCLEOTIDE SEQUENCE [LARGE SCALE MRNA] (ISOFORM 1)</scope>
    <source>
        <tissue>Hypothalamus</tissue>
    </source>
</reference>
<reference key="3">
    <citation type="submission" date="2003-05" db="EMBL/GenBank/DDBJ databases">
        <title>Cloning of human full-length CDSs in BD Creator(TM) system donor vector.</title>
        <authorList>
            <person name="Kalnine N."/>
            <person name="Chen X."/>
            <person name="Rolfs A."/>
            <person name="Halleck A."/>
            <person name="Hines L."/>
            <person name="Eisenstein S."/>
            <person name="Koundinya M."/>
            <person name="Raphael J."/>
            <person name="Moreira D."/>
            <person name="Kelley T."/>
            <person name="LaBaer J."/>
            <person name="Lin Y."/>
            <person name="Phelan M."/>
            <person name="Farmer A."/>
        </authorList>
    </citation>
    <scope>NUCLEOTIDE SEQUENCE [LARGE SCALE MRNA] (ISOFORM 1)</scope>
</reference>
<reference key="4">
    <citation type="journal article" date="2004" name="Nat. Genet.">
        <title>Complete sequencing and characterization of 21,243 full-length human cDNAs.</title>
        <authorList>
            <person name="Ota T."/>
            <person name="Suzuki Y."/>
            <person name="Nishikawa T."/>
            <person name="Otsuki T."/>
            <person name="Sugiyama T."/>
            <person name="Irie R."/>
            <person name="Wakamatsu A."/>
            <person name="Hayashi K."/>
            <person name="Sato H."/>
            <person name="Nagai K."/>
            <person name="Kimura K."/>
            <person name="Makita H."/>
            <person name="Sekine M."/>
            <person name="Obayashi M."/>
            <person name="Nishi T."/>
            <person name="Shibahara T."/>
            <person name="Tanaka T."/>
            <person name="Ishii S."/>
            <person name="Yamamoto J."/>
            <person name="Saito K."/>
            <person name="Kawai Y."/>
            <person name="Isono Y."/>
            <person name="Nakamura Y."/>
            <person name="Nagahari K."/>
            <person name="Murakami K."/>
            <person name="Yasuda T."/>
            <person name="Iwayanagi T."/>
            <person name="Wagatsuma M."/>
            <person name="Shiratori A."/>
            <person name="Sudo H."/>
            <person name="Hosoiri T."/>
            <person name="Kaku Y."/>
            <person name="Kodaira H."/>
            <person name="Kondo H."/>
            <person name="Sugawara M."/>
            <person name="Takahashi M."/>
            <person name="Kanda K."/>
            <person name="Yokoi T."/>
            <person name="Furuya T."/>
            <person name="Kikkawa E."/>
            <person name="Omura Y."/>
            <person name="Abe K."/>
            <person name="Kamihara K."/>
            <person name="Katsuta N."/>
            <person name="Sato K."/>
            <person name="Tanikawa M."/>
            <person name="Yamazaki M."/>
            <person name="Ninomiya K."/>
            <person name="Ishibashi T."/>
            <person name="Yamashita H."/>
            <person name="Murakawa K."/>
            <person name="Fujimori K."/>
            <person name="Tanai H."/>
            <person name="Kimata M."/>
            <person name="Watanabe M."/>
            <person name="Hiraoka S."/>
            <person name="Chiba Y."/>
            <person name="Ishida S."/>
            <person name="Ono Y."/>
            <person name="Takiguchi S."/>
            <person name="Watanabe S."/>
            <person name="Yosida M."/>
            <person name="Hotuta T."/>
            <person name="Kusano J."/>
            <person name="Kanehori K."/>
            <person name="Takahashi-Fujii A."/>
            <person name="Hara H."/>
            <person name="Tanase T.-O."/>
            <person name="Nomura Y."/>
            <person name="Togiya S."/>
            <person name="Komai F."/>
            <person name="Hara R."/>
            <person name="Takeuchi K."/>
            <person name="Arita M."/>
            <person name="Imose N."/>
            <person name="Musashino K."/>
            <person name="Yuuki H."/>
            <person name="Oshima A."/>
            <person name="Sasaki N."/>
            <person name="Aotsuka S."/>
            <person name="Yoshikawa Y."/>
            <person name="Matsunawa H."/>
            <person name="Ichihara T."/>
            <person name="Shiohata N."/>
            <person name="Sano S."/>
            <person name="Moriya S."/>
            <person name="Momiyama H."/>
            <person name="Satoh N."/>
            <person name="Takami S."/>
            <person name="Terashima Y."/>
            <person name="Suzuki O."/>
            <person name="Nakagawa S."/>
            <person name="Senoh A."/>
            <person name="Mizoguchi H."/>
            <person name="Goto Y."/>
            <person name="Shimizu F."/>
            <person name="Wakebe H."/>
            <person name="Hishigaki H."/>
            <person name="Watanabe T."/>
            <person name="Sugiyama A."/>
            <person name="Takemoto M."/>
            <person name="Kawakami B."/>
            <person name="Yamazaki M."/>
            <person name="Watanabe K."/>
            <person name="Kumagai A."/>
            <person name="Itakura S."/>
            <person name="Fukuzumi Y."/>
            <person name="Fujimori Y."/>
            <person name="Komiyama M."/>
            <person name="Tashiro H."/>
            <person name="Tanigami A."/>
            <person name="Fujiwara T."/>
            <person name="Ono T."/>
            <person name="Yamada K."/>
            <person name="Fujii Y."/>
            <person name="Ozaki K."/>
            <person name="Hirao M."/>
            <person name="Ohmori Y."/>
            <person name="Kawabata A."/>
            <person name="Hikiji T."/>
            <person name="Kobatake N."/>
            <person name="Inagaki H."/>
            <person name="Ikema Y."/>
            <person name="Okamoto S."/>
            <person name="Okitani R."/>
            <person name="Kawakami T."/>
            <person name="Noguchi S."/>
            <person name="Itoh T."/>
            <person name="Shigeta K."/>
            <person name="Senba T."/>
            <person name="Matsumura K."/>
            <person name="Nakajima Y."/>
            <person name="Mizuno T."/>
            <person name="Morinaga M."/>
            <person name="Sasaki M."/>
            <person name="Togashi T."/>
            <person name="Oyama M."/>
            <person name="Hata H."/>
            <person name="Watanabe M."/>
            <person name="Komatsu T."/>
            <person name="Mizushima-Sugano J."/>
            <person name="Satoh T."/>
            <person name="Shirai Y."/>
            <person name="Takahashi Y."/>
            <person name="Nakagawa K."/>
            <person name="Okumura K."/>
            <person name="Nagase T."/>
            <person name="Nomura N."/>
            <person name="Kikuchi H."/>
            <person name="Masuho Y."/>
            <person name="Yamashita R."/>
            <person name="Nakai K."/>
            <person name="Yada T."/>
            <person name="Nakamura Y."/>
            <person name="Ohara O."/>
            <person name="Isogai T."/>
            <person name="Sugano S."/>
        </authorList>
    </citation>
    <scope>NUCLEOTIDE SEQUENCE [LARGE SCALE MRNA] (ISOFORMS 1 AND 2)</scope>
    <source>
        <tissue>Amygdala</tissue>
        <tissue>Cerebellum</tissue>
    </source>
</reference>
<reference key="5">
    <citation type="journal article" date="2006" name="Nature">
        <title>The DNA sequence, annotation and analysis of human chromosome 3.</title>
        <authorList>
            <person name="Muzny D.M."/>
            <person name="Scherer S.E."/>
            <person name="Kaul R."/>
            <person name="Wang J."/>
            <person name="Yu J."/>
            <person name="Sudbrak R."/>
            <person name="Buhay C.J."/>
            <person name="Chen R."/>
            <person name="Cree A."/>
            <person name="Ding Y."/>
            <person name="Dugan-Rocha S."/>
            <person name="Gill R."/>
            <person name="Gunaratne P."/>
            <person name="Harris R.A."/>
            <person name="Hawes A.C."/>
            <person name="Hernandez J."/>
            <person name="Hodgson A.V."/>
            <person name="Hume J."/>
            <person name="Jackson A."/>
            <person name="Khan Z.M."/>
            <person name="Kovar-Smith C."/>
            <person name="Lewis L.R."/>
            <person name="Lozado R.J."/>
            <person name="Metzker M.L."/>
            <person name="Milosavljevic A."/>
            <person name="Miner G.R."/>
            <person name="Morgan M.B."/>
            <person name="Nazareth L.V."/>
            <person name="Scott G."/>
            <person name="Sodergren E."/>
            <person name="Song X.-Z."/>
            <person name="Steffen D."/>
            <person name="Wei S."/>
            <person name="Wheeler D.A."/>
            <person name="Wright M.W."/>
            <person name="Worley K.C."/>
            <person name="Yuan Y."/>
            <person name="Zhang Z."/>
            <person name="Adams C.Q."/>
            <person name="Ansari-Lari M.A."/>
            <person name="Ayele M."/>
            <person name="Brown M.J."/>
            <person name="Chen G."/>
            <person name="Chen Z."/>
            <person name="Clendenning J."/>
            <person name="Clerc-Blankenburg K.P."/>
            <person name="Chen R."/>
            <person name="Chen Z."/>
            <person name="Davis C."/>
            <person name="Delgado O."/>
            <person name="Dinh H.H."/>
            <person name="Dong W."/>
            <person name="Draper H."/>
            <person name="Ernst S."/>
            <person name="Fu G."/>
            <person name="Gonzalez-Garay M.L."/>
            <person name="Garcia D.K."/>
            <person name="Gillett W."/>
            <person name="Gu J."/>
            <person name="Hao B."/>
            <person name="Haugen E."/>
            <person name="Havlak P."/>
            <person name="He X."/>
            <person name="Hennig S."/>
            <person name="Hu S."/>
            <person name="Huang W."/>
            <person name="Jackson L.R."/>
            <person name="Jacob L.S."/>
            <person name="Kelly S.H."/>
            <person name="Kube M."/>
            <person name="Levy R."/>
            <person name="Li Z."/>
            <person name="Liu B."/>
            <person name="Liu J."/>
            <person name="Liu W."/>
            <person name="Lu J."/>
            <person name="Maheshwari M."/>
            <person name="Nguyen B.-V."/>
            <person name="Okwuonu G.O."/>
            <person name="Palmeiri A."/>
            <person name="Pasternak S."/>
            <person name="Perez L.M."/>
            <person name="Phelps K.A."/>
            <person name="Plopper F.J."/>
            <person name="Qiang B."/>
            <person name="Raymond C."/>
            <person name="Rodriguez R."/>
            <person name="Saenphimmachak C."/>
            <person name="Santibanez J."/>
            <person name="Shen H."/>
            <person name="Shen Y."/>
            <person name="Subramanian S."/>
            <person name="Tabor P.E."/>
            <person name="Verduzco D."/>
            <person name="Waldron L."/>
            <person name="Wang J."/>
            <person name="Wang J."/>
            <person name="Wang Q."/>
            <person name="Williams G.A."/>
            <person name="Wong G.K.-S."/>
            <person name="Yao Z."/>
            <person name="Zhang J."/>
            <person name="Zhang X."/>
            <person name="Zhao G."/>
            <person name="Zhou J."/>
            <person name="Zhou Y."/>
            <person name="Nelson D."/>
            <person name="Lehrach H."/>
            <person name="Reinhardt R."/>
            <person name="Naylor S.L."/>
            <person name="Yang H."/>
            <person name="Olson M."/>
            <person name="Weinstock G."/>
            <person name="Gibbs R.A."/>
        </authorList>
    </citation>
    <scope>NUCLEOTIDE SEQUENCE [LARGE SCALE GENOMIC DNA]</scope>
</reference>
<reference key="6">
    <citation type="submission" date="2005-09" db="EMBL/GenBank/DDBJ databases">
        <authorList>
            <person name="Mural R.J."/>
            <person name="Istrail S."/>
            <person name="Sutton G.G."/>
            <person name="Florea L."/>
            <person name="Halpern A.L."/>
            <person name="Mobarry C.M."/>
            <person name="Lippert R."/>
            <person name="Walenz B."/>
            <person name="Shatkay H."/>
            <person name="Dew I."/>
            <person name="Miller J.R."/>
            <person name="Flanigan M.J."/>
            <person name="Edwards N.J."/>
            <person name="Bolanos R."/>
            <person name="Fasulo D."/>
            <person name="Halldorsson B.V."/>
            <person name="Hannenhalli S."/>
            <person name="Turner R."/>
            <person name="Yooseph S."/>
            <person name="Lu F."/>
            <person name="Nusskern D.R."/>
            <person name="Shue B.C."/>
            <person name="Zheng X.H."/>
            <person name="Zhong F."/>
            <person name="Delcher A.L."/>
            <person name="Huson D.H."/>
            <person name="Kravitz S.A."/>
            <person name="Mouchard L."/>
            <person name="Reinert K."/>
            <person name="Remington K.A."/>
            <person name="Clark A.G."/>
            <person name="Waterman M.S."/>
            <person name="Eichler E.E."/>
            <person name="Adams M.D."/>
            <person name="Hunkapiller M.W."/>
            <person name="Myers E.W."/>
            <person name="Venter J.C."/>
        </authorList>
    </citation>
    <scope>NUCLEOTIDE SEQUENCE [LARGE SCALE GENOMIC DNA]</scope>
</reference>
<reference key="7">
    <citation type="journal article" date="2004" name="Genome Res.">
        <title>The status, quality, and expansion of the NIH full-length cDNA project: the Mammalian Gene Collection (MGC).</title>
        <authorList>
            <consortium name="The MGC Project Team"/>
        </authorList>
    </citation>
    <scope>NUCLEOTIDE SEQUENCE [LARGE SCALE MRNA] (ISOFORM 1)</scope>
    <source>
        <tissue>Kidney</tissue>
    </source>
</reference>
<reference key="8">
    <citation type="journal article" date="2011" name="BMC Syst. Biol.">
        <title>Initial characterization of the human central proteome.</title>
        <authorList>
            <person name="Burkard T.R."/>
            <person name="Planyavsky M."/>
            <person name="Kaupe I."/>
            <person name="Breitwieser F.P."/>
            <person name="Buerckstuemmer T."/>
            <person name="Bennett K.L."/>
            <person name="Superti-Furga G."/>
            <person name="Colinge J."/>
        </authorList>
    </citation>
    <scope>IDENTIFICATION BY MASS SPECTROMETRY [LARGE SCALE ANALYSIS]</scope>
</reference>
<reference key="9">
    <citation type="journal article" date="2012" name="Proc. Natl. Acad. Sci. U.S.A.">
        <title>N-terminal acetylome analyses and functional insights of the N-terminal acetyltransferase NatB.</title>
        <authorList>
            <person name="Van Damme P."/>
            <person name="Lasa M."/>
            <person name="Polevoda B."/>
            <person name="Gazquez C."/>
            <person name="Elosegui-Artola A."/>
            <person name="Kim D.S."/>
            <person name="De Juan-Pardo E."/>
            <person name="Demeyer K."/>
            <person name="Hole K."/>
            <person name="Larrea E."/>
            <person name="Timmerman E."/>
            <person name="Prieto J."/>
            <person name="Arnesen T."/>
            <person name="Sherman F."/>
            <person name="Gevaert K."/>
            <person name="Aldabe R."/>
        </authorList>
    </citation>
    <scope>ACETYLATION [LARGE SCALE ANALYSIS] AT ALA-2 (ISOFORM 2)</scope>
    <scope>CLEAVAGE OF INITIATOR METHIONINE [LARGE SCALE ANALYSIS] (ISOFORM 2)</scope>
    <scope>IDENTIFICATION BY MASS SPECTROMETRY [LARGE SCALE ANALYSIS]</scope>
</reference>
<reference key="10">
    <citation type="journal article" date="2013" name="Hum. Mol. Genet.">
        <title>Vacuolar-type H+-ATPase V1A subunit is a molecular partner of Wolfram syndrome 1 (WFS1) protein, which regulates its expression and stability.</title>
        <authorList>
            <person name="Gharanei S."/>
            <person name="Zatyka M."/>
            <person name="Astuti D."/>
            <person name="Fenton J."/>
            <person name="Sik A."/>
            <person name="Nagy Z."/>
            <person name="Barrett T.G."/>
        </authorList>
    </citation>
    <scope>SUBCELLULAR LOCATION</scope>
    <scope>INTERACTION WITH WFS1</scope>
</reference>
<reference key="11">
    <citation type="journal article" date="2013" name="J. Proteome Res.">
        <title>Toward a comprehensive characterization of a human cancer cell phosphoproteome.</title>
        <authorList>
            <person name="Zhou H."/>
            <person name="Di Palma S."/>
            <person name="Preisinger C."/>
            <person name="Peng M."/>
            <person name="Polat A.N."/>
            <person name="Heck A.J."/>
            <person name="Mohammed S."/>
        </authorList>
    </citation>
    <scope>PHOSPHORYLATION [LARGE SCALE ANALYSIS] AT THR-136 AND SER-384</scope>
    <scope>IDENTIFICATION BY MASS SPECTROMETRY [LARGE SCALE ANALYSIS]</scope>
    <source>
        <tissue>Cervix carcinoma</tissue>
        <tissue>Erythroleukemia</tissue>
    </source>
</reference>
<reference key="12">
    <citation type="journal article" date="2014" name="J. Proteomics">
        <title>An enzyme assisted RP-RPLC approach for in-depth analysis of human liver phosphoproteome.</title>
        <authorList>
            <person name="Bian Y."/>
            <person name="Song C."/>
            <person name="Cheng K."/>
            <person name="Dong M."/>
            <person name="Wang F."/>
            <person name="Huang J."/>
            <person name="Sun D."/>
            <person name="Wang L."/>
            <person name="Ye M."/>
            <person name="Zou H."/>
        </authorList>
    </citation>
    <scope>IDENTIFICATION BY MASS SPECTROMETRY [LARGE SCALE ANALYSIS]</scope>
    <source>
        <tissue>Liver</tissue>
    </source>
</reference>
<reference key="13">
    <citation type="journal article" date="2015" name="Proteomics">
        <title>N-terminome analysis of the human mitochondrial proteome.</title>
        <authorList>
            <person name="Vaca Jacome A.S."/>
            <person name="Rabilloud T."/>
            <person name="Schaeffer-Reiss C."/>
            <person name="Rompais M."/>
            <person name="Ayoub D."/>
            <person name="Lane L."/>
            <person name="Bairoch A."/>
            <person name="Van Dorsselaer A."/>
            <person name="Carapito C."/>
        </authorList>
    </citation>
    <scope>IDENTIFICATION BY MASS SPECTROMETRY [LARGE SCALE ANALYSIS]</scope>
</reference>
<reference key="14">
    <citation type="journal article" date="2017" name="Am. J. Hum. Genet.">
        <title>Mutations in ATP6V1E1 or ATP6V1A cause autosomal-recessive cutis laxa.</title>
        <authorList>
            <person name="Van Damme T."/>
            <person name="Gardeitchik T."/>
            <person name="Mohamed M."/>
            <person name="Guerrero-Castillo S."/>
            <person name="Freisinger P."/>
            <person name="Guillemyn B."/>
            <person name="Kariminejad A."/>
            <person name="Dalloyaux D."/>
            <person name="van Kraaij S."/>
            <person name="Lefeber D.J."/>
            <person name="Syx D."/>
            <person name="Steyaert W."/>
            <person name="De Rycke R."/>
            <person name="Hoischen A."/>
            <person name="Kamsteeg E.J."/>
            <person name="Wong S.Y."/>
            <person name="van Scherpenzeel M."/>
            <person name="Jamali P."/>
            <person name="Brandt U."/>
            <person name="Nijtmans L."/>
            <person name="Korenke G.C."/>
            <person name="Chung B.H."/>
            <person name="Mak C.C."/>
            <person name="Hausser I."/>
            <person name="Kornak U."/>
            <person name="Fischer-Zirnsak B."/>
            <person name="Strom T.M."/>
            <person name="Meitinger T."/>
            <person name="Alanay Y."/>
            <person name="Utine G.E."/>
            <person name="Leung P.K."/>
            <person name="Ghaderi-Sohi S."/>
            <person name="Coucke P."/>
            <person name="Symoens S."/>
            <person name="De Paepe A."/>
            <person name="Thiel C."/>
            <person name="Haack T.B."/>
            <person name="Malfait F."/>
            <person name="Morava E."/>
            <person name="Callewaert B."/>
            <person name="Wevers R.A."/>
        </authorList>
    </citation>
    <scope>INVOLVEMENT IN ARCL2D</scope>
    <scope>TISSUE SPECIFICITY</scope>
    <scope>VARIANTS ARCL2D ASP-72 AND CYS-338</scope>
</reference>
<reference key="15">
    <citation type="journal article" date="2017" name="Elife">
        <title>The vacuolar-ATPase complex and assembly factors, TMEM199 and CCDC115, control HIF1alpha prolyl hydroxylation by regulating cellular iron levels.</title>
        <authorList>
            <person name="Miles A.L."/>
            <person name="Burr S.P."/>
            <person name="Grice G.L."/>
            <person name="Nathan J.A."/>
        </authorList>
    </citation>
    <scope>FUNCTION</scope>
</reference>
<reference key="16">
    <citation type="journal article" date="2018" name="Brain">
        <title>De novo mutations of the ATP6V1A gene cause developmental encephalopathy with epilepsy.</title>
        <authorList>
            <person name="Fassio A."/>
            <person name="Esposito A."/>
            <person name="Kato M."/>
            <person name="Saitsu H."/>
            <person name="Mei D."/>
            <person name="Marini C."/>
            <person name="Conti V."/>
            <person name="Nakashima M."/>
            <person name="Okamoto N."/>
            <person name="Olmez Turker A."/>
            <person name="Albuz B."/>
            <person name="Semerci Guenduez C.N."/>
            <person name="Yanagihara K."/>
            <person name="Belmonte E."/>
            <person name="Maragliano L."/>
            <person name="Ramsey K."/>
            <person name="Balak C."/>
            <person name="Siniard A."/>
            <person name="Narayanan V."/>
            <person name="Ohba C."/>
            <person name="Shiina M."/>
            <person name="Ogata K."/>
            <person name="Matsumoto N."/>
            <person name="Benfenati F."/>
            <person name="Guerrini R."/>
        </authorList>
    </citation>
    <scope>INVOLVEMENT IN IECEE3</scope>
    <scope>VARIANTS IECEE3 ARG-27; TYR-100; ASN-349 AND GLY-371</scope>
    <scope>VARIANTS ASN-11 AND ARG-249</scope>
    <scope>CHARACTERIZATION OF VARIANTS IECEE3 TYR-100 AND ASN-349</scope>
    <scope>SUBCELLULAR LOCATION</scope>
    <scope>FUNCTION</scope>
</reference>
<reference key="17">
    <citation type="journal article" date="2020" name="Biochim. Biophys. Acta">
        <title>Heat shock factor 4 regulates lysosome activity by modulating the alphaB-crystallin-ATP6V1A-mTOR complex in ocular lens.</title>
        <authorList>
            <person name="Cui X."/>
            <person name="Feng R."/>
            <person name="Wang J."/>
            <person name="Du C."/>
            <person name="Pi X."/>
            <person name="Chen D."/>
            <person name="Li J."/>
            <person name="Li H."/>
            <person name="Zhang J."/>
            <person name="Zhang J."/>
            <person name="Mu H."/>
            <person name="Zhang F."/>
            <person name="Liu M."/>
            <person name="Hu Y."/>
        </authorList>
    </citation>
    <scope>INTERACTION WITH CRYAB AND MTOR</scope>
</reference>
<reference key="18">
    <citation type="journal article" date="2020" name="J. Biol. Chem.">
        <title>The ATPase ATP6V1A facilitates rabies virus replication by promoting virion uncoating and interacting with the viral matrix protein.</title>
        <authorList>
            <person name="Liu X."/>
            <person name="Li F."/>
            <person name="Zhang J."/>
            <person name="Wang L."/>
            <person name="Wang J."/>
            <person name="Wen Z."/>
            <person name="Wang Z."/>
            <person name="Shuai L."/>
            <person name="Wang X."/>
            <person name="Ge J."/>
            <person name="Zhao D."/>
            <person name="Bu Z."/>
        </authorList>
    </citation>
    <scope>FUNCTION (MICROBIAL INFECTION)</scope>
    <scope>SUBCELLULAR LOCATION</scope>
    <scope>INTERACTION WITH RABIES VIRUS PROTEIN M (MICROBIAL INFECTION)</scope>
    <scope>MUTAGENESIS OF LYS-256 AND GLU-279</scope>
</reference>
<reference key="19">
    <citation type="journal article" date="2020" name="Trends Biochem. Sci.">
        <title>Structure and Roles of V-type ATPases.</title>
        <authorList>
            <person name="Vasanthakumar T."/>
            <person name="Rubinstein J.L."/>
        </authorList>
    </citation>
    <scope>REVIEW</scope>
</reference>
<reference evidence="16 17 18 19" key="20">
    <citation type="journal article" date="2020" name="Mol. Cell">
        <title>Structures of a Complete Human V-ATPase Reveal Mechanisms of Its Assembly.</title>
        <authorList>
            <person name="Wang L."/>
            <person name="Wu D."/>
            <person name="Robinson C.V."/>
            <person name="Wu H."/>
            <person name="Fu T.M."/>
        </authorList>
    </citation>
    <scope>STRUCTURE BY ELECTRON MICROSCOPY (2.90 ANGSTROMS) IN COMPLEX WITH ADP</scope>
    <scope>FUNCTION</scope>
    <scope>IDENTIFICATION IN THE V-ATPASE COMPLEX</scope>
</reference>
<protein>
    <recommendedName>
        <fullName>V-type proton ATPase catalytic subunit A</fullName>
        <shortName>V-ATPase subunit A</shortName>
        <ecNumber evidence="2">7.1.2.2</ecNumber>
    </recommendedName>
    <alternativeName>
        <fullName>V-ATPase 69 kDa subunit</fullName>
    </alternativeName>
    <alternativeName>
        <fullName>Vacuolar ATPase isoform VA68</fullName>
    </alternativeName>
    <alternativeName>
        <fullName>Vacuolar proton pump subunit alpha</fullName>
    </alternativeName>
</protein>
<dbReference type="EC" id="7.1.2.2" evidence="2"/>
<dbReference type="EMBL" id="L09235">
    <property type="protein sequence ID" value="AAA83249.1"/>
    <property type="molecule type" value="mRNA"/>
</dbReference>
<dbReference type="EMBL" id="AF113129">
    <property type="protein sequence ID" value="AAF14870.1"/>
    <property type="molecule type" value="mRNA"/>
</dbReference>
<dbReference type="EMBL" id="BT006672">
    <property type="protein sequence ID" value="AAP35318.1"/>
    <property type="molecule type" value="mRNA"/>
</dbReference>
<dbReference type="EMBL" id="AK293804">
    <property type="protein sequence ID" value="BAH11601.1"/>
    <property type="molecule type" value="mRNA"/>
</dbReference>
<dbReference type="EMBL" id="AK314779">
    <property type="protein sequence ID" value="BAG37315.1"/>
    <property type="molecule type" value="mRNA"/>
</dbReference>
<dbReference type="EMBL" id="AC079944">
    <property type="status" value="NOT_ANNOTATED_CDS"/>
    <property type="molecule type" value="Genomic_DNA"/>
</dbReference>
<dbReference type="EMBL" id="AC108693">
    <property type="status" value="NOT_ANNOTATED_CDS"/>
    <property type="molecule type" value="Genomic_DNA"/>
</dbReference>
<dbReference type="EMBL" id="CH471052">
    <property type="protein sequence ID" value="EAW79625.1"/>
    <property type="molecule type" value="Genomic_DNA"/>
</dbReference>
<dbReference type="EMBL" id="CH471052">
    <property type="protein sequence ID" value="EAW79626.1"/>
    <property type="molecule type" value="Genomic_DNA"/>
</dbReference>
<dbReference type="EMBL" id="BC013138">
    <property type="protein sequence ID" value="AAH13138.1"/>
    <property type="molecule type" value="mRNA"/>
</dbReference>
<dbReference type="CCDS" id="CCDS2976.1">
    <molecule id="P38606-1"/>
</dbReference>
<dbReference type="PIR" id="B46091">
    <property type="entry name" value="B46091"/>
</dbReference>
<dbReference type="RefSeq" id="NP_001681.2">
    <molecule id="P38606-1"/>
    <property type="nucleotide sequence ID" value="NM_001690.3"/>
</dbReference>
<dbReference type="RefSeq" id="XP_047304261.1">
    <molecule id="P38606-1"/>
    <property type="nucleotide sequence ID" value="XM_047448305.1"/>
</dbReference>
<dbReference type="RefSeq" id="XP_047304262.1">
    <molecule id="P38606-1"/>
    <property type="nucleotide sequence ID" value="XM_047448306.1"/>
</dbReference>
<dbReference type="RefSeq" id="XP_054202813.1">
    <molecule id="P38606-1"/>
    <property type="nucleotide sequence ID" value="XM_054346838.1"/>
</dbReference>
<dbReference type="RefSeq" id="XP_054202814.1">
    <molecule id="P38606-1"/>
    <property type="nucleotide sequence ID" value="XM_054346839.1"/>
</dbReference>
<dbReference type="RefSeq" id="XP_054202815.1">
    <molecule id="P38606-1"/>
    <property type="nucleotide sequence ID" value="XM_054346840.1"/>
</dbReference>
<dbReference type="PDB" id="6WLZ">
    <property type="method" value="EM"/>
    <property type="resolution" value="2.90 A"/>
    <property type="chains" value="A/B/C=1-617"/>
</dbReference>
<dbReference type="PDB" id="6WM2">
    <property type="method" value="EM"/>
    <property type="resolution" value="3.10 A"/>
    <property type="chains" value="A/B/C=1-617"/>
</dbReference>
<dbReference type="PDB" id="6WM3">
    <property type="method" value="EM"/>
    <property type="resolution" value="3.40 A"/>
    <property type="chains" value="A/B/C=1-617"/>
</dbReference>
<dbReference type="PDB" id="6WM4">
    <property type="method" value="EM"/>
    <property type="resolution" value="3.60 A"/>
    <property type="chains" value="A/B/C=1-617"/>
</dbReference>
<dbReference type="PDB" id="7U4T">
    <property type="method" value="EM"/>
    <property type="resolution" value="3.60 A"/>
    <property type="chains" value="A/B/C=1-617"/>
</dbReference>
<dbReference type="PDB" id="7UNF">
    <property type="method" value="EM"/>
    <property type="resolution" value="4.08 A"/>
    <property type="chains" value="L/M/N=1-617"/>
</dbReference>
<dbReference type="PDBsum" id="6WLZ"/>
<dbReference type="PDBsum" id="6WM2"/>
<dbReference type="PDBsum" id="6WM3"/>
<dbReference type="PDBsum" id="6WM4"/>
<dbReference type="PDBsum" id="7U4T"/>
<dbReference type="PDBsum" id="7UNF"/>
<dbReference type="EMDB" id="EMD-21845"/>
<dbReference type="EMDB" id="EMD-21847"/>
<dbReference type="EMDB" id="EMD-21848"/>
<dbReference type="EMDB" id="EMD-21849"/>
<dbReference type="EMDB" id="EMD-26334"/>
<dbReference type="EMDB" id="EMD-26623"/>
<dbReference type="SMR" id="P38606"/>
<dbReference type="BioGRID" id="107007">
    <property type="interactions" value="271"/>
</dbReference>
<dbReference type="ComplexPortal" id="CPX-2470">
    <property type="entry name" value="Vacuolar proton translocating ATPase complex, ATP6V0A1 variant"/>
</dbReference>
<dbReference type="ComplexPortal" id="CPX-6904">
    <property type="entry name" value="Vacuolar proton translocating ATPase complex, ATP6V0A2 variant"/>
</dbReference>
<dbReference type="ComplexPortal" id="CPX-6905">
    <property type="entry name" value="Vacuolar proton translocating ATPase complex, ATP6V0A3 variant"/>
</dbReference>
<dbReference type="ComplexPortal" id="CPX-6912">
    <property type="entry name" value="Vacuolar proton translocating ATPase complex, ATP6V0A4 variant"/>
</dbReference>
<dbReference type="CORUM" id="P38606"/>
<dbReference type="FunCoup" id="P38606">
    <property type="interactions" value="3081"/>
</dbReference>
<dbReference type="IntAct" id="P38606">
    <property type="interactions" value="143"/>
</dbReference>
<dbReference type="MINT" id="P38606"/>
<dbReference type="STRING" id="9606.ENSP00000273398"/>
<dbReference type="ChEMBL" id="CHEMBL4295756"/>
<dbReference type="DrugBank" id="DB00630">
    <property type="generic name" value="Alendronic acid"/>
</dbReference>
<dbReference type="DrugBank" id="DB06733">
    <property type="generic name" value="Bafilomycin A1"/>
</dbReference>
<dbReference type="DrugBank" id="DB06734">
    <property type="generic name" value="Bafilomycin B1"/>
</dbReference>
<dbReference type="DrugBank" id="DB01077">
    <property type="generic name" value="Etidronic acid"/>
</dbReference>
<dbReference type="DrugBank" id="DB01133">
    <property type="generic name" value="Tiludronic acid"/>
</dbReference>
<dbReference type="TCDB" id="3.A.2.2.4">
    <property type="family name" value="the h+- or na+-translocating f-type, v-type and a-type atpase (f-atpase) superfamily"/>
</dbReference>
<dbReference type="GlyCosmos" id="P38606">
    <property type="glycosylation" value="2 sites, 1 glycan"/>
</dbReference>
<dbReference type="GlyGen" id="P38606">
    <property type="glycosylation" value="5 sites, 1 O-linked glycan (5 sites)"/>
</dbReference>
<dbReference type="iPTMnet" id="P38606"/>
<dbReference type="MetOSite" id="P38606"/>
<dbReference type="PhosphoSitePlus" id="P38606"/>
<dbReference type="SwissPalm" id="P38606"/>
<dbReference type="BioMuta" id="ATP6V1A"/>
<dbReference type="DMDM" id="22096378"/>
<dbReference type="jPOST" id="P38606"/>
<dbReference type="MassIVE" id="P38606"/>
<dbReference type="PaxDb" id="9606-ENSP00000273398"/>
<dbReference type="PeptideAtlas" id="P38606"/>
<dbReference type="PRIDE" id="P38606"/>
<dbReference type="ProteomicsDB" id="55303">
    <molecule id="P38606-1"/>
</dbReference>
<dbReference type="ProteomicsDB" id="6360"/>
<dbReference type="Pumba" id="P38606"/>
<dbReference type="Antibodypedia" id="32600">
    <property type="antibodies" value="203 antibodies from 33 providers"/>
</dbReference>
<dbReference type="DNASU" id="523"/>
<dbReference type="Ensembl" id="ENST00000273398.8">
    <molecule id="P38606-1"/>
    <property type="protein sequence ID" value="ENSP00000273398.3"/>
    <property type="gene ID" value="ENSG00000114573.12"/>
</dbReference>
<dbReference type="Ensembl" id="ENST00000496747.6">
    <molecule id="P38606-2"/>
    <property type="protein sequence ID" value="ENSP00000417545.2"/>
    <property type="gene ID" value="ENSG00000114573.12"/>
</dbReference>
<dbReference type="Ensembl" id="ENST00000703904.2">
    <molecule id="P38606-1"/>
    <property type="protein sequence ID" value="ENSP00000515542.1"/>
    <property type="gene ID" value="ENSG00000114573.12"/>
</dbReference>
<dbReference type="Ensembl" id="ENST00000703910.1">
    <molecule id="P38606-1"/>
    <property type="protein sequence ID" value="ENSP00000515547.1"/>
    <property type="gene ID" value="ENSG00000114573.12"/>
</dbReference>
<dbReference type="Ensembl" id="ENST00000703911.1">
    <molecule id="P38606-1"/>
    <property type="protein sequence ID" value="ENSP00000515548.1"/>
    <property type="gene ID" value="ENSG00000114573.12"/>
</dbReference>
<dbReference type="GeneID" id="523"/>
<dbReference type="KEGG" id="hsa:523"/>
<dbReference type="MANE-Select" id="ENST00000273398.8">
    <property type="protein sequence ID" value="ENSP00000273398.3"/>
    <property type="RefSeq nucleotide sequence ID" value="NM_001690.4"/>
    <property type="RefSeq protein sequence ID" value="NP_001681.2"/>
</dbReference>
<dbReference type="UCSC" id="uc003eao.4">
    <molecule id="P38606-1"/>
    <property type="organism name" value="human"/>
</dbReference>
<dbReference type="AGR" id="HGNC:851"/>
<dbReference type="CTD" id="523"/>
<dbReference type="DisGeNET" id="523"/>
<dbReference type="GeneCards" id="ATP6V1A"/>
<dbReference type="HGNC" id="HGNC:851">
    <property type="gene designation" value="ATP6V1A"/>
</dbReference>
<dbReference type="HPA" id="ENSG00000114573">
    <property type="expression patterns" value="Low tissue specificity"/>
</dbReference>
<dbReference type="MalaCards" id="ATP6V1A"/>
<dbReference type="MIM" id="607027">
    <property type="type" value="gene"/>
</dbReference>
<dbReference type="MIM" id="617403">
    <property type="type" value="phenotype"/>
</dbReference>
<dbReference type="MIM" id="618012">
    <property type="type" value="phenotype"/>
</dbReference>
<dbReference type="neXtProt" id="NX_P38606"/>
<dbReference type="OpenTargets" id="ENSG00000114573"/>
<dbReference type="Orphanet" id="357074">
    <property type="disease" value="Autosomal recessive cutis laxa type 2, classic type"/>
</dbReference>
<dbReference type="Orphanet" id="442835">
    <property type="disease" value="Non-specific early-onset epileptic encephalopathy"/>
</dbReference>
<dbReference type="PharmGKB" id="PA25152"/>
<dbReference type="VEuPathDB" id="HostDB:ENSG00000114573"/>
<dbReference type="eggNOG" id="KOG1352">
    <property type="taxonomic scope" value="Eukaryota"/>
</dbReference>
<dbReference type="GeneTree" id="ENSGT00550000074787"/>
<dbReference type="HOGENOM" id="CLU_008162_3_1_1"/>
<dbReference type="InParanoid" id="P38606"/>
<dbReference type="OMA" id="RIVKTFW"/>
<dbReference type="OrthoDB" id="1676488at2759"/>
<dbReference type="PAN-GO" id="P38606">
    <property type="GO annotations" value="2 GO annotations based on evolutionary models"/>
</dbReference>
<dbReference type="PhylomeDB" id="P38606"/>
<dbReference type="TreeFam" id="TF300811"/>
<dbReference type="BioCyc" id="MetaCyc:HS03781-MONOMER"/>
<dbReference type="PathwayCommons" id="P38606"/>
<dbReference type="Reactome" id="R-HSA-1222556">
    <property type="pathway name" value="ROS and RNS production in phagocytes"/>
</dbReference>
<dbReference type="Reactome" id="R-HSA-77387">
    <property type="pathway name" value="Insulin receptor recycling"/>
</dbReference>
<dbReference type="Reactome" id="R-HSA-917977">
    <property type="pathway name" value="Transferrin endocytosis and recycling"/>
</dbReference>
<dbReference type="Reactome" id="R-HSA-9639288">
    <property type="pathway name" value="Amino acids regulate mTORC1"/>
</dbReference>
<dbReference type="Reactome" id="R-HSA-983712">
    <property type="pathway name" value="Ion channel transport"/>
</dbReference>
<dbReference type="Reactome" id="R-HSA-9857377">
    <property type="pathway name" value="Regulation of MITF-M-dependent genes involved in lysosome biogenesis and autophagy"/>
</dbReference>
<dbReference type="SignaLink" id="P38606"/>
<dbReference type="SIGNOR" id="P38606"/>
<dbReference type="BioGRID-ORCS" id="523">
    <property type="hits" value="821 hits in 1186 CRISPR screens"/>
</dbReference>
<dbReference type="CD-CODE" id="FB4E32DD">
    <property type="entry name" value="Presynaptic clusters and postsynaptic densities"/>
</dbReference>
<dbReference type="ChiTaRS" id="ATP6V1A">
    <property type="organism name" value="human"/>
</dbReference>
<dbReference type="GeneWiki" id="ATP6V1A"/>
<dbReference type="GenomeRNAi" id="523"/>
<dbReference type="Pharos" id="P38606">
    <property type="development level" value="Tbio"/>
</dbReference>
<dbReference type="PRO" id="PR:P38606"/>
<dbReference type="Proteomes" id="UP000005640">
    <property type="component" value="Chromosome 3"/>
</dbReference>
<dbReference type="RNAct" id="P38606">
    <property type="molecule type" value="protein"/>
</dbReference>
<dbReference type="Bgee" id="ENSG00000114573">
    <property type="expression patterns" value="Expressed in Brodmann (1909) area 23 and 207 other cell types or tissues"/>
</dbReference>
<dbReference type="ExpressionAtlas" id="P38606">
    <property type="expression patterns" value="baseline and differential"/>
</dbReference>
<dbReference type="GO" id="GO:0016324">
    <property type="term" value="C:apical plasma membrane"/>
    <property type="evidence" value="ECO:0007669"/>
    <property type="project" value="Ensembl"/>
</dbReference>
<dbReference type="GO" id="GO:0030665">
    <property type="term" value="C:clathrin-coated vesicle membrane"/>
    <property type="evidence" value="ECO:0007669"/>
    <property type="project" value="UniProtKB-SubCell"/>
</dbReference>
<dbReference type="GO" id="GO:0005829">
    <property type="term" value="C:cytosol"/>
    <property type="evidence" value="ECO:0000314"/>
    <property type="project" value="HPA"/>
</dbReference>
<dbReference type="GO" id="GO:0010008">
    <property type="term" value="C:endosome membrane"/>
    <property type="evidence" value="ECO:0000303"/>
    <property type="project" value="ComplexPortal"/>
</dbReference>
<dbReference type="GO" id="GO:0070062">
    <property type="term" value="C:extracellular exosome"/>
    <property type="evidence" value="ECO:0007005"/>
    <property type="project" value="UniProtKB"/>
</dbReference>
<dbReference type="GO" id="GO:0098850">
    <property type="term" value="C:extrinsic component of synaptic vesicle membrane"/>
    <property type="evidence" value="ECO:0007669"/>
    <property type="project" value="Ensembl"/>
</dbReference>
<dbReference type="GO" id="GO:0000139">
    <property type="term" value="C:Golgi membrane"/>
    <property type="evidence" value="ECO:0000303"/>
    <property type="project" value="ComplexPortal"/>
</dbReference>
<dbReference type="GO" id="GO:0043231">
    <property type="term" value="C:intracellular membrane-bounded organelle"/>
    <property type="evidence" value="ECO:0000314"/>
    <property type="project" value="HPA"/>
</dbReference>
<dbReference type="GO" id="GO:0005765">
    <property type="term" value="C:lysosomal membrane"/>
    <property type="evidence" value="ECO:0007005"/>
    <property type="project" value="UniProtKB"/>
</dbReference>
<dbReference type="GO" id="GO:0016020">
    <property type="term" value="C:membrane"/>
    <property type="evidence" value="ECO:0000314"/>
    <property type="project" value="ComplexPortal"/>
</dbReference>
<dbReference type="GO" id="GO:0005902">
    <property type="term" value="C:microvillus"/>
    <property type="evidence" value="ECO:0007669"/>
    <property type="project" value="Ensembl"/>
</dbReference>
<dbReference type="GO" id="GO:0005654">
    <property type="term" value="C:nucleoplasm"/>
    <property type="evidence" value="ECO:0000314"/>
    <property type="project" value="HPA"/>
</dbReference>
<dbReference type="GO" id="GO:0005886">
    <property type="term" value="C:plasma membrane"/>
    <property type="evidence" value="ECO:0000250"/>
    <property type="project" value="UniProtKB"/>
</dbReference>
<dbReference type="GO" id="GO:0016469">
    <property type="term" value="C:proton-transporting two-sector ATPase complex"/>
    <property type="evidence" value="ECO:0000304"/>
    <property type="project" value="ProtInc"/>
</dbReference>
<dbReference type="GO" id="GO:0033176">
    <property type="term" value="C:proton-transporting V-type ATPase complex"/>
    <property type="evidence" value="ECO:0000303"/>
    <property type="project" value="ComplexPortal"/>
</dbReference>
<dbReference type="GO" id="GO:0030141">
    <property type="term" value="C:secretory granule"/>
    <property type="evidence" value="ECO:0000314"/>
    <property type="project" value="UniProtKB"/>
</dbReference>
<dbReference type="GO" id="GO:0000221">
    <property type="term" value="C:vacuolar proton-transporting V-type ATPase, V1 domain"/>
    <property type="evidence" value="ECO:0000314"/>
    <property type="project" value="UniProtKB"/>
</dbReference>
<dbReference type="GO" id="GO:0005524">
    <property type="term" value="F:ATP binding"/>
    <property type="evidence" value="ECO:0007669"/>
    <property type="project" value="UniProtKB-KW"/>
</dbReference>
<dbReference type="GO" id="GO:0016887">
    <property type="term" value="F:ATP hydrolysis activity"/>
    <property type="evidence" value="ECO:0007669"/>
    <property type="project" value="InterPro"/>
</dbReference>
<dbReference type="GO" id="GO:0046961">
    <property type="term" value="F:proton-transporting ATPase activity, rotational mechanism"/>
    <property type="evidence" value="ECO:0000318"/>
    <property type="project" value="GO_Central"/>
</dbReference>
<dbReference type="GO" id="GO:0046034">
    <property type="term" value="P:ATP metabolic process"/>
    <property type="evidence" value="ECO:0007669"/>
    <property type="project" value="InterPro"/>
</dbReference>
<dbReference type="GO" id="GO:0036295">
    <property type="term" value="P:cellular response to increased oxygen levels"/>
    <property type="evidence" value="ECO:0000315"/>
    <property type="project" value="UniProtKB"/>
</dbReference>
<dbReference type="GO" id="GO:0048388">
    <property type="term" value="P:endosomal lumen acidification"/>
    <property type="evidence" value="ECO:0000303"/>
    <property type="project" value="ComplexPortal"/>
</dbReference>
<dbReference type="GO" id="GO:0061795">
    <property type="term" value="P:Golgi lumen acidification"/>
    <property type="evidence" value="ECO:0000303"/>
    <property type="project" value="ComplexPortal"/>
</dbReference>
<dbReference type="GO" id="GO:0006879">
    <property type="term" value="P:intracellular iron ion homeostasis"/>
    <property type="evidence" value="ECO:0000315"/>
    <property type="project" value="UniProtKB"/>
</dbReference>
<dbReference type="GO" id="GO:0051452">
    <property type="term" value="P:intracellular pH reduction"/>
    <property type="evidence" value="ECO:0000303"/>
    <property type="project" value="ComplexPortal"/>
</dbReference>
<dbReference type="GO" id="GO:0007042">
    <property type="term" value="P:lysosomal lumen acidification"/>
    <property type="evidence" value="ECO:0000303"/>
    <property type="project" value="ComplexPortal"/>
</dbReference>
<dbReference type="GO" id="GO:1902600">
    <property type="term" value="P:proton transmembrane transport"/>
    <property type="evidence" value="ECO:0000318"/>
    <property type="project" value="GO_Central"/>
</dbReference>
<dbReference type="GO" id="GO:0016241">
    <property type="term" value="P:regulation of macroautophagy"/>
    <property type="evidence" value="ECO:0000303"/>
    <property type="project" value="ParkinsonsUK-UCL"/>
</dbReference>
<dbReference type="GO" id="GO:0097401">
    <property type="term" value="P:synaptic vesicle lumen acidification"/>
    <property type="evidence" value="ECO:0007669"/>
    <property type="project" value="Ensembl"/>
</dbReference>
<dbReference type="GO" id="GO:0007035">
    <property type="term" value="P:vacuolar acidification"/>
    <property type="evidence" value="ECO:0000303"/>
    <property type="project" value="ComplexPortal"/>
</dbReference>
<dbReference type="CDD" id="cd18111">
    <property type="entry name" value="ATP-synt_V_A-type_alpha_C"/>
    <property type="match status" value="1"/>
</dbReference>
<dbReference type="CDD" id="cd18119">
    <property type="entry name" value="ATP-synt_V_A-type_alpha_N"/>
    <property type="match status" value="1"/>
</dbReference>
<dbReference type="CDD" id="cd01134">
    <property type="entry name" value="V_A-ATPase_A"/>
    <property type="match status" value="1"/>
</dbReference>
<dbReference type="FunFam" id="1.10.1140.10:FF:000002">
    <property type="entry name" value="V-type proton ATPase catalytic subunit A"/>
    <property type="match status" value="1"/>
</dbReference>
<dbReference type="FunFam" id="2.40.30.20:FF:000002">
    <property type="entry name" value="V-type proton ATPase catalytic subunit A"/>
    <property type="match status" value="1"/>
</dbReference>
<dbReference type="FunFam" id="2.40.50.100:FF:000008">
    <property type="entry name" value="V-type proton ATPase catalytic subunit A"/>
    <property type="match status" value="1"/>
</dbReference>
<dbReference type="FunFam" id="3.40.50.300:FF:000052">
    <property type="entry name" value="V-type proton ATPase catalytic subunit A"/>
    <property type="match status" value="1"/>
</dbReference>
<dbReference type="Gene3D" id="2.40.30.20">
    <property type="match status" value="1"/>
</dbReference>
<dbReference type="Gene3D" id="2.40.50.100">
    <property type="match status" value="1"/>
</dbReference>
<dbReference type="Gene3D" id="1.10.1140.10">
    <property type="entry name" value="Bovine Mitochondrial F1-atpase, Atp Synthase Beta Chain, Chain D, domain 3"/>
    <property type="match status" value="1"/>
</dbReference>
<dbReference type="Gene3D" id="3.40.50.300">
    <property type="entry name" value="P-loop containing nucleotide triphosphate hydrolases"/>
    <property type="match status" value="1"/>
</dbReference>
<dbReference type="HAMAP" id="MF_00309">
    <property type="entry name" value="ATP_synth_A_arch"/>
    <property type="match status" value="1"/>
</dbReference>
<dbReference type="InterPro" id="IPR055190">
    <property type="entry name" value="ATP-synt_VA_C"/>
</dbReference>
<dbReference type="InterPro" id="IPR031686">
    <property type="entry name" value="ATP-synth_a_Xtn"/>
</dbReference>
<dbReference type="InterPro" id="IPR023366">
    <property type="entry name" value="ATP_synth_asu-like_sf"/>
</dbReference>
<dbReference type="InterPro" id="IPR020003">
    <property type="entry name" value="ATPase_a/bsu_AS"/>
</dbReference>
<dbReference type="InterPro" id="IPR004100">
    <property type="entry name" value="ATPase_F1/V1/A1_a/bsu_N"/>
</dbReference>
<dbReference type="InterPro" id="IPR036121">
    <property type="entry name" value="ATPase_F1/V1/A1_a/bsu_N_sf"/>
</dbReference>
<dbReference type="InterPro" id="IPR000194">
    <property type="entry name" value="ATPase_F1/V1/A1_a/bsu_nucl-bd"/>
</dbReference>
<dbReference type="InterPro" id="IPR024034">
    <property type="entry name" value="ATPase_F1/V1_b/a_C"/>
</dbReference>
<dbReference type="InterPro" id="IPR005725">
    <property type="entry name" value="ATPase_V1-cplx_asu"/>
</dbReference>
<dbReference type="InterPro" id="IPR027417">
    <property type="entry name" value="P-loop_NTPase"/>
</dbReference>
<dbReference type="InterPro" id="IPR022878">
    <property type="entry name" value="V-ATPase_asu"/>
</dbReference>
<dbReference type="NCBIfam" id="NF003220">
    <property type="entry name" value="PRK04192.1"/>
    <property type="match status" value="1"/>
</dbReference>
<dbReference type="NCBIfam" id="TIGR01042">
    <property type="entry name" value="V-ATPase_V1_A"/>
    <property type="match status" value="1"/>
</dbReference>
<dbReference type="PANTHER" id="PTHR43607">
    <property type="entry name" value="V-TYPE PROTON ATPASE CATALYTIC SUBUNIT A"/>
    <property type="match status" value="1"/>
</dbReference>
<dbReference type="PANTHER" id="PTHR43607:SF9">
    <property type="entry name" value="V-TYPE PROTON ATPASE CATALYTIC SUBUNIT A"/>
    <property type="match status" value="1"/>
</dbReference>
<dbReference type="Pfam" id="PF00006">
    <property type="entry name" value="ATP-synt_ab"/>
    <property type="match status" value="1"/>
</dbReference>
<dbReference type="Pfam" id="PF02874">
    <property type="entry name" value="ATP-synt_ab_N"/>
    <property type="match status" value="1"/>
</dbReference>
<dbReference type="Pfam" id="PF16886">
    <property type="entry name" value="ATP-synt_ab_Xtn"/>
    <property type="match status" value="1"/>
</dbReference>
<dbReference type="Pfam" id="PF22919">
    <property type="entry name" value="ATP-synt_VA_C"/>
    <property type="match status" value="1"/>
</dbReference>
<dbReference type="SUPFAM" id="SSF47917">
    <property type="entry name" value="C-terminal domain of alpha and beta subunits of F1 ATP synthase"/>
    <property type="match status" value="1"/>
</dbReference>
<dbReference type="SUPFAM" id="SSF50615">
    <property type="entry name" value="N-terminal domain of alpha and beta subunits of F1 ATP synthase"/>
    <property type="match status" value="1"/>
</dbReference>
<dbReference type="SUPFAM" id="SSF52540">
    <property type="entry name" value="P-loop containing nucleoside triphosphate hydrolases"/>
    <property type="match status" value="1"/>
</dbReference>
<dbReference type="PROSITE" id="PS00152">
    <property type="entry name" value="ATPASE_ALPHA_BETA"/>
    <property type="match status" value="1"/>
</dbReference>
<proteinExistence type="evidence at protein level"/>
<gene>
    <name type="primary">ATP6V1A</name>
    <name type="synonym">ATP6A1</name>
    <name type="synonym">ATP6V1A1</name>
    <name type="synonym">VPP2</name>
</gene>
<accession>P38606</accession>
<accession>B2RBR8</accession>
<accession>B7Z1R5</accession>
<accession>D3DN75</accession>
<accession>Q53YD9</accession>
<accession>Q96DY6</accession>
<accession>Q9UHY3</accession>
<sequence>MDFSKLPKILDEDKESTFGYVHGVSGPVVTACDMAGAAMYELVRVGHSELVGEIIRLEGDMATIQVYEETSGVSVGDPVLRTGKPLSVELGPGIMGAIFDGIQRPLSDISSQTQSIYIPRGVNVSALSRDIKWDFTPCKNLRVGSHITGGDIYGIVSENSLIKHKIMLPPRNRGTVTYIAPPGNYDTSDVVLELEFEGVKEKFTMVQVWPVRQVRPVTEKLPANHPLLTGQRVLDALFPCVQGGTTAIPGAFGCGKTVISQSLSKYSNSDVIIYVGCGERGNEMSEVLRDFPELTMEVDGKVESIMKRTALVANTSNMPVAAREASIYTGITLSEYFRDMGYHVSMMADSTSRWAEALREISGRLAEMPADSGYPAYLGARLASFYERAGRVKCLGNPEREGSVSIVGAVSPPGGDFSDPVTSATLGIVQVFWGLDKKLAQRKHFPSVNWLISYSKYMRALDEYYDKHFTEFVPLRTKAKEILQEEEDLAEIVQLVGKASLAETDKITLEVAKLIKDDFLQQNGYTPYDRFCPFYKTVGMLSNMIAFYDMARRAVETTAQSDNKITWSIIREHMGDILYKLSSMKFKDPLKDGEAKIKSDYAQLLEDMQNAFRSLED</sequence>
<evidence type="ECO:0000250" key="1">
    <source>
        <dbReference type="UniProtKB" id="P31404"/>
    </source>
</evidence>
<evidence type="ECO:0000250" key="2">
    <source>
        <dbReference type="UniProtKB" id="P50516"/>
    </source>
</evidence>
<evidence type="ECO:0000269" key="3">
    <source>
    </source>
</evidence>
<evidence type="ECO:0000269" key="4">
    <source>
    </source>
</evidence>
<evidence type="ECO:0000269" key="5">
    <source>
    </source>
</evidence>
<evidence type="ECO:0000269" key="6">
    <source>
    </source>
</evidence>
<evidence type="ECO:0000269" key="7">
    <source>
    </source>
</evidence>
<evidence type="ECO:0000269" key="8">
    <source>
    </source>
</evidence>
<evidence type="ECO:0000269" key="9">
    <source>
    </source>
</evidence>
<evidence type="ECO:0000269" key="10">
    <source>
    </source>
</evidence>
<evidence type="ECO:0000303" key="11">
    <source>
    </source>
</evidence>
<evidence type="ECO:0000303" key="12">
    <source>
    </source>
</evidence>
<evidence type="ECO:0000305" key="13"/>
<evidence type="ECO:0000305" key="14">
    <source>
    </source>
</evidence>
<evidence type="ECO:0000312" key="15">
    <source>
        <dbReference type="PDB" id="6WLZ"/>
    </source>
</evidence>
<evidence type="ECO:0007744" key="16">
    <source>
        <dbReference type="PDB" id="6WLZ"/>
    </source>
</evidence>
<evidence type="ECO:0007744" key="17">
    <source>
        <dbReference type="PDB" id="6WM2"/>
    </source>
</evidence>
<evidence type="ECO:0007744" key="18">
    <source>
        <dbReference type="PDB" id="6WM3"/>
    </source>
</evidence>
<evidence type="ECO:0007744" key="19">
    <source>
        <dbReference type="PDB" id="6WM4"/>
    </source>
</evidence>
<evidence type="ECO:0007744" key="20">
    <source>
    </source>
</evidence>
<evidence type="ECO:0007744" key="21">
    <source>
    </source>
</evidence>
<evidence type="ECO:0007829" key="22">
    <source>
        <dbReference type="PDB" id="6WLZ"/>
    </source>
</evidence>
<evidence type="ECO:0007829" key="23">
    <source>
        <dbReference type="PDB" id="6WM3"/>
    </source>
</evidence>
<name>VATA_HUMAN</name>